<dbReference type="EC" id="2.1.1.166" evidence="1"/>
<dbReference type="EMBL" id="CP000308">
    <property type="protein sequence ID" value="ABG12022.1"/>
    <property type="molecule type" value="Genomic_DNA"/>
</dbReference>
<dbReference type="RefSeq" id="WP_002228196.1">
    <property type="nucleotide sequence ID" value="NZ_CP009906.1"/>
</dbReference>
<dbReference type="SMR" id="Q1CC00"/>
<dbReference type="GeneID" id="57975211"/>
<dbReference type="KEGG" id="ypa:YPA_0053"/>
<dbReference type="Proteomes" id="UP000001971">
    <property type="component" value="Chromosome"/>
</dbReference>
<dbReference type="GO" id="GO:0005737">
    <property type="term" value="C:cytoplasm"/>
    <property type="evidence" value="ECO:0007669"/>
    <property type="project" value="UniProtKB-SubCell"/>
</dbReference>
<dbReference type="GO" id="GO:0008650">
    <property type="term" value="F:rRNA (uridine-2'-O-)-methyltransferase activity"/>
    <property type="evidence" value="ECO:0007669"/>
    <property type="project" value="UniProtKB-UniRule"/>
</dbReference>
<dbReference type="FunFam" id="3.40.50.150:FF:000005">
    <property type="entry name" value="Ribosomal RNA large subunit methyltransferase E"/>
    <property type="match status" value="1"/>
</dbReference>
<dbReference type="Gene3D" id="3.40.50.150">
    <property type="entry name" value="Vaccinia Virus protein VP39"/>
    <property type="match status" value="1"/>
</dbReference>
<dbReference type="HAMAP" id="MF_01547">
    <property type="entry name" value="RNA_methyltr_E"/>
    <property type="match status" value="1"/>
</dbReference>
<dbReference type="InterPro" id="IPR050082">
    <property type="entry name" value="RNA_methyltr_RlmE"/>
</dbReference>
<dbReference type="InterPro" id="IPR002877">
    <property type="entry name" value="RNA_MeTrfase_FtsJ_dom"/>
</dbReference>
<dbReference type="InterPro" id="IPR015507">
    <property type="entry name" value="rRNA-MeTfrase_E"/>
</dbReference>
<dbReference type="InterPro" id="IPR004512">
    <property type="entry name" value="rRNA_MeTrfase_gammaproteobac"/>
</dbReference>
<dbReference type="InterPro" id="IPR029063">
    <property type="entry name" value="SAM-dependent_MTases_sf"/>
</dbReference>
<dbReference type="NCBIfam" id="NF008390">
    <property type="entry name" value="PRK11188.1"/>
    <property type="match status" value="1"/>
</dbReference>
<dbReference type="NCBIfam" id="TIGR00438">
    <property type="entry name" value="rrmJ"/>
    <property type="match status" value="1"/>
</dbReference>
<dbReference type="PANTHER" id="PTHR10920">
    <property type="entry name" value="RIBOSOMAL RNA METHYLTRANSFERASE"/>
    <property type="match status" value="1"/>
</dbReference>
<dbReference type="PANTHER" id="PTHR10920:SF18">
    <property type="entry name" value="RRNA METHYLTRANSFERASE 2, MITOCHONDRIAL"/>
    <property type="match status" value="1"/>
</dbReference>
<dbReference type="Pfam" id="PF01728">
    <property type="entry name" value="FtsJ"/>
    <property type="match status" value="1"/>
</dbReference>
<dbReference type="PIRSF" id="PIRSF005461">
    <property type="entry name" value="23S_rRNA_mtase"/>
    <property type="match status" value="1"/>
</dbReference>
<dbReference type="SUPFAM" id="SSF53335">
    <property type="entry name" value="S-adenosyl-L-methionine-dependent methyltransferases"/>
    <property type="match status" value="1"/>
</dbReference>
<protein>
    <recommendedName>
        <fullName evidence="1">Ribosomal RNA large subunit methyltransferase E</fullName>
        <ecNumber evidence="1">2.1.1.166</ecNumber>
    </recommendedName>
    <alternativeName>
        <fullName evidence="1">23S rRNA Um2552 methyltransferase</fullName>
    </alternativeName>
    <alternativeName>
        <fullName evidence="1">rRNA (uridine-2'-O-)-methyltransferase</fullName>
    </alternativeName>
</protein>
<gene>
    <name evidence="1" type="primary">rlmE</name>
    <name evidence="1" type="synonym">ftsJ</name>
    <name evidence="1" type="synonym">rrmJ</name>
    <name type="ordered locus">YPA_0053</name>
</gene>
<comment type="function">
    <text evidence="1">Specifically methylates the uridine in position 2552 of 23S rRNA at the 2'-O position of the ribose in the fully assembled 50S ribosomal subunit.</text>
</comment>
<comment type="catalytic activity">
    <reaction evidence="1">
        <text>uridine(2552) in 23S rRNA + S-adenosyl-L-methionine = 2'-O-methyluridine(2552) in 23S rRNA + S-adenosyl-L-homocysteine + H(+)</text>
        <dbReference type="Rhea" id="RHEA:42720"/>
        <dbReference type="Rhea" id="RHEA-COMP:10202"/>
        <dbReference type="Rhea" id="RHEA-COMP:10203"/>
        <dbReference type="ChEBI" id="CHEBI:15378"/>
        <dbReference type="ChEBI" id="CHEBI:57856"/>
        <dbReference type="ChEBI" id="CHEBI:59789"/>
        <dbReference type="ChEBI" id="CHEBI:65315"/>
        <dbReference type="ChEBI" id="CHEBI:74478"/>
        <dbReference type="EC" id="2.1.1.166"/>
    </reaction>
</comment>
<comment type="subcellular location">
    <subcellularLocation>
        <location evidence="1">Cytoplasm</location>
    </subcellularLocation>
</comment>
<comment type="similarity">
    <text evidence="1">Belongs to the class I-like SAM-binding methyltransferase superfamily. RNA methyltransferase RlmE family.</text>
</comment>
<feature type="chain" id="PRO_0000282815" description="Ribosomal RNA large subunit methyltransferase E">
    <location>
        <begin position="1"/>
        <end position="209"/>
    </location>
</feature>
<feature type="active site" description="Proton acceptor" evidence="1">
    <location>
        <position position="164"/>
    </location>
</feature>
<feature type="binding site" evidence="1">
    <location>
        <position position="63"/>
    </location>
    <ligand>
        <name>S-adenosyl-L-methionine</name>
        <dbReference type="ChEBI" id="CHEBI:59789"/>
    </ligand>
</feature>
<feature type="binding site" evidence="1">
    <location>
        <position position="65"/>
    </location>
    <ligand>
        <name>S-adenosyl-L-methionine</name>
        <dbReference type="ChEBI" id="CHEBI:59789"/>
    </ligand>
</feature>
<feature type="binding site" evidence="1">
    <location>
        <position position="83"/>
    </location>
    <ligand>
        <name>S-adenosyl-L-methionine</name>
        <dbReference type="ChEBI" id="CHEBI:59789"/>
    </ligand>
</feature>
<feature type="binding site" evidence="1">
    <location>
        <position position="99"/>
    </location>
    <ligand>
        <name>S-adenosyl-L-methionine</name>
        <dbReference type="ChEBI" id="CHEBI:59789"/>
    </ligand>
</feature>
<feature type="binding site" evidence="1">
    <location>
        <position position="124"/>
    </location>
    <ligand>
        <name>S-adenosyl-L-methionine</name>
        <dbReference type="ChEBI" id="CHEBI:59789"/>
    </ligand>
</feature>
<reference key="1">
    <citation type="journal article" date="2006" name="J. Bacteriol.">
        <title>Complete genome sequence of Yersinia pestis strains Antiqua and Nepal516: evidence of gene reduction in an emerging pathogen.</title>
        <authorList>
            <person name="Chain P.S.G."/>
            <person name="Hu P."/>
            <person name="Malfatti S.A."/>
            <person name="Radnedge L."/>
            <person name="Larimer F."/>
            <person name="Vergez L.M."/>
            <person name="Worsham P."/>
            <person name="Chu M.C."/>
            <person name="Andersen G.L."/>
        </authorList>
    </citation>
    <scope>NUCLEOTIDE SEQUENCE [LARGE SCALE GENOMIC DNA]</scope>
    <source>
        <strain>Antiqua</strain>
    </source>
</reference>
<proteinExistence type="inferred from homology"/>
<accession>Q1CC00</accession>
<name>RLME_YERPA</name>
<keyword id="KW-0963">Cytoplasm</keyword>
<keyword id="KW-0489">Methyltransferase</keyword>
<keyword id="KW-0698">rRNA processing</keyword>
<keyword id="KW-0949">S-adenosyl-L-methionine</keyword>
<keyword id="KW-0808">Transferase</keyword>
<organism>
    <name type="scientific">Yersinia pestis bv. Antiqua (strain Antiqua)</name>
    <dbReference type="NCBI Taxonomy" id="360102"/>
    <lineage>
        <taxon>Bacteria</taxon>
        <taxon>Pseudomonadati</taxon>
        <taxon>Pseudomonadota</taxon>
        <taxon>Gammaproteobacteria</taxon>
        <taxon>Enterobacterales</taxon>
        <taxon>Yersiniaceae</taxon>
        <taxon>Yersinia</taxon>
    </lineage>
</organism>
<evidence type="ECO:0000255" key="1">
    <source>
        <dbReference type="HAMAP-Rule" id="MF_01547"/>
    </source>
</evidence>
<sequence length="209" mass="23409">MSNKKRSASSSRWLQEHFSDKYVIQAQKKGLRSRAWFKLDEIQQSDKLFKQGMTVVDLGAAPGGWSQYAVTQIGSKGRVIACDLLPMDPIVGVDFLQGDFRDELVLKALLERVGDKKVQVVMCDMAPNMSGTPAVDIPKSMYLVELALDMCRDVLAPGGSFLVKVFQGDGFDEYLREIRSLFTKVKIRKPDASRARSREVYIVATGRKL</sequence>